<protein>
    <recommendedName>
        <fullName evidence="5">Scorpine-like peptide Ev37</fullName>
    </recommendedName>
</protein>
<reference key="1">
    <citation type="journal article" date="2013" name="Protein Expr. Purif.">
        <title>Expression and characterization of a novel scorpine-like peptide Ev37, from the scorpion Euscorpiops validus.</title>
        <authorList>
            <person name="Feng J."/>
            <person name="Yu C."/>
            <person name="Wang M."/>
            <person name="Li Z."/>
            <person name="Wu Y."/>
            <person name="Cao Z."/>
            <person name="Li W."/>
            <person name="He X."/>
            <person name="Han S."/>
        </authorList>
    </citation>
    <scope>NUCLEOTIDE SEQUENCE [MRNA]</scope>
    <scope>FUNCTION</scope>
    <scope>RECOMBINANT EXPRESSION</scope>
    <source>
        <tissue>Venom gland</tissue>
    </source>
</reference>
<reference key="2">
    <citation type="journal article" date="2019" name="J. Biol. Chem.">
        <title>A scorpion venom peptide Ev37 restricts viral late entry by alkalizing acidic organelles.</title>
        <authorList>
            <person name="Li F."/>
            <person name="Lang Y."/>
            <person name="Ji Z."/>
            <person name="Xia Z."/>
            <person name="Han Y."/>
            <person name="Cheng Y."/>
            <person name="Liu G."/>
            <person name="Sun F."/>
            <person name="Zhao Y."/>
            <person name="Gao M."/>
            <person name="Chen Z."/>
            <person name="Wu Y."/>
            <person name="Li W."/>
            <person name="Cao Z."/>
        </authorList>
    </citation>
    <scope>BIOTECHNOLOGY</scope>
    <scope>RECOMBINANT EXPRESSION</scope>
    <scope>3D-STRUCTURE MODELING</scope>
</reference>
<organism>
    <name type="scientific">Euscorpiops validus</name>
    <name type="common">Scorpion</name>
    <dbReference type="NCBI Taxonomy" id="1643527"/>
    <lineage>
        <taxon>Eukaryota</taxon>
        <taxon>Metazoa</taxon>
        <taxon>Ecdysozoa</taxon>
        <taxon>Arthropoda</taxon>
        <taxon>Chelicerata</taxon>
        <taxon>Arachnida</taxon>
        <taxon>Scorpiones</taxon>
        <taxon>Iurida</taxon>
        <taxon>Chactoidea</taxon>
        <taxon>Euscorpiidae</taxon>
        <taxon>Scorpiopinae</taxon>
        <taxon>Scorpiopini</taxon>
        <taxon>Euscorpiops</taxon>
    </lineage>
</organism>
<proteinExistence type="evidence at protein level"/>
<accession>P0DL47</accession>
<comment type="function">
    <text evidence="3">Selectively inhibits Kv1.3/KCNA3 channel (IC(50)=0.95 uM). Both N-terminal and C-terminal domains are likely involved in the interaction with Kv1.3/KCNA3, since neither its N-terminal domain (1-36) nor its C-terminal domain (37-78) block Kv1.3/KCNA3 channel.</text>
</comment>
<comment type="subcellular location">
    <subcellularLocation>
        <location evidence="7">Secreted</location>
    </subcellularLocation>
</comment>
<comment type="tissue specificity">
    <text evidence="7">Expressed by the venom gland.</text>
</comment>
<comment type="biotechnology">
    <text evidence="4">Promising broad-spectrum antiviral agent that functions by alkalizing acidic organelles in host cells, which prevents viral genome release from endosomes and restricts viral entry. Is effective at noncytotoxic concentrations against viruses that enter host cells through low pH-dependent fusion, including dengue virus type 2 (DENV-2), hepatitis C virus (HCV), Zika virus (ZIKV), and herpes simplex virus type 1 (HSV-1). Due to its specific mechanism of action and broad-spectrum effectiveness, is a potential candidate for development as an antiviral drug.</text>
</comment>
<comment type="miscellaneous">
    <text evidence="3">Negative results: does not block Kv1.1/KCNA1 and Kv1.2/KCNA2 channels. Neither the full-length toxin nor the two individual domains (N-terminal (1-36) and C-terminal (37-78) domains) show any cytolytic effects on bacteria or red blood cells.</text>
</comment>
<comment type="similarity">
    <text evidence="6">Belongs to the long chain scorpion toxin family. Class 3 subfamily.</text>
</comment>
<evidence type="ECO:0000255" key="1"/>
<evidence type="ECO:0000255" key="2">
    <source>
        <dbReference type="PROSITE-ProRule" id="PRU01209"/>
    </source>
</evidence>
<evidence type="ECO:0000269" key="3">
    <source>
    </source>
</evidence>
<evidence type="ECO:0000269" key="4">
    <source>
    </source>
</evidence>
<evidence type="ECO:0000303" key="5">
    <source>
    </source>
</evidence>
<evidence type="ECO:0000305" key="6"/>
<evidence type="ECO:0000305" key="7">
    <source>
    </source>
</evidence>
<feature type="signal peptide" evidence="1">
    <location>
        <begin position="1"/>
        <end position="19"/>
    </location>
</feature>
<feature type="chain" id="PRO_0000433342" description="Scorpine-like peptide Ev37" evidence="7">
    <location>
        <begin position="20"/>
        <end position="97"/>
    </location>
</feature>
<feature type="domain" description="BetaSPN-type CS-alpha/beta" evidence="2">
    <location>
        <begin position="55"/>
        <end position="95"/>
    </location>
</feature>
<feature type="disulfide bond" evidence="2">
    <location>
        <begin position="58"/>
        <end position="82"/>
    </location>
</feature>
<feature type="disulfide bond" evidence="2">
    <location>
        <begin position="68"/>
        <end position="87"/>
    </location>
</feature>
<feature type="disulfide bond" evidence="2">
    <location>
        <begin position="72"/>
        <end position="89"/>
    </location>
</feature>
<dbReference type="SMR" id="P0DL47"/>
<dbReference type="GO" id="GO:0005576">
    <property type="term" value="C:extracellular region"/>
    <property type="evidence" value="ECO:0007669"/>
    <property type="project" value="UniProtKB-SubCell"/>
</dbReference>
<dbReference type="GO" id="GO:0015459">
    <property type="term" value="F:potassium channel regulator activity"/>
    <property type="evidence" value="ECO:0007669"/>
    <property type="project" value="UniProtKB-KW"/>
</dbReference>
<dbReference type="GO" id="GO:0090729">
    <property type="term" value="F:toxin activity"/>
    <property type="evidence" value="ECO:0007669"/>
    <property type="project" value="UniProtKB-KW"/>
</dbReference>
<dbReference type="InterPro" id="IPR029237">
    <property type="entry name" value="Long_scorpion_toxin_alpha/beta"/>
</dbReference>
<dbReference type="Pfam" id="PF14866">
    <property type="entry name" value="Scorpion_toxin_alpha-beta"/>
    <property type="match status" value="1"/>
</dbReference>
<dbReference type="PROSITE" id="PS51862">
    <property type="entry name" value="BSPN_CSAB"/>
    <property type="match status" value="1"/>
</dbReference>
<keyword id="KW-1015">Disulfide bond</keyword>
<keyword id="KW-0872">Ion channel impairing toxin</keyword>
<keyword id="KW-0632">Potassium channel impairing toxin</keyword>
<keyword id="KW-0964">Secreted</keyword>
<keyword id="KW-0732">Signal</keyword>
<keyword id="KW-0800">Toxin</keyword>
<keyword id="KW-1220">Voltage-gated potassium channel impairing toxin</keyword>
<name>KBX3_EUSVA</name>
<sequence length="97" mass="10495">MNSKLTVIVLLALITIASCGLINEKKVQQYLDEKLPNGVVKGALKSLVHKAAKNQNLCAFNVDTVGMCDADCKRQGKAKGVCHGTKCKCDVELSYKK</sequence>